<evidence type="ECO:0000255" key="1">
    <source>
        <dbReference type="HAMAP-Rule" id="MF_00125"/>
    </source>
</evidence>
<reference key="1">
    <citation type="submission" date="2007-03" db="EMBL/GenBank/DDBJ databases">
        <title>Complete sequence of Desulfotomaculum reducens MI-1.</title>
        <authorList>
            <consortium name="US DOE Joint Genome Institute"/>
            <person name="Copeland A."/>
            <person name="Lucas S."/>
            <person name="Lapidus A."/>
            <person name="Barry K."/>
            <person name="Detter J.C."/>
            <person name="Glavina del Rio T."/>
            <person name="Hammon N."/>
            <person name="Israni S."/>
            <person name="Dalin E."/>
            <person name="Tice H."/>
            <person name="Pitluck S."/>
            <person name="Sims D."/>
            <person name="Brettin T."/>
            <person name="Bruce D."/>
            <person name="Han C."/>
            <person name="Tapia R."/>
            <person name="Schmutz J."/>
            <person name="Larimer F."/>
            <person name="Land M."/>
            <person name="Hauser L."/>
            <person name="Kyrpides N."/>
            <person name="Kim E."/>
            <person name="Tebo B.M."/>
            <person name="Richardson P."/>
        </authorList>
    </citation>
    <scope>NUCLEOTIDE SEQUENCE [LARGE SCALE GENOMIC DNA]</scope>
    <source>
        <strain>ATCC BAA-1160 / DSM 100696 / MI-1</strain>
    </source>
</reference>
<proteinExistence type="inferred from homology"/>
<protein>
    <recommendedName>
        <fullName evidence="1">ATP phosphoribosyltransferase regulatory subunit</fullName>
    </recommendedName>
</protein>
<comment type="function">
    <text evidence="1">Required for the first step of histidine biosynthesis. May allow the feedback regulation of ATP phosphoribosyltransferase activity by histidine.</text>
</comment>
<comment type="pathway">
    <text evidence="1">Amino-acid biosynthesis; L-histidine biosynthesis; L-histidine from 5-phospho-alpha-D-ribose 1-diphosphate: step 1/9.</text>
</comment>
<comment type="subunit">
    <text evidence="1">Heteromultimer composed of HisG and HisZ subunits.</text>
</comment>
<comment type="subcellular location">
    <subcellularLocation>
        <location evidence="1">Cytoplasm</location>
    </subcellularLocation>
</comment>
<comment type="miscellaneous">
    <text>This function is generally fulfilled by the C-terminal part of HisG, which is missing in some bacteria such as this one.</text>
</comment>
<comment type="similarity">
    <text evidence="1">Belongs to the class-II aminoacyl-tRNA synthetase family. HisZ subfamily.</text>
</comment>
<organism>
    <name type="scientific">Desulforamulus reducens (strain ATCC BAA-1160 / DSM 100696 / MI-1)</name>
    <name type="common">Desulfotomaculum reducens</name>
    <dbReference type="NCBI Taxonomy" id="349161"/>
    <lineage>
        <taxon>Bacteria</taxon>
        <taxon>Bacillati</taxon>
        <taxon>Bacillota</taxon>
        <taxon>Clostridia</taxon>
        <taxon>Eubacteriales</taxon>
        <taxon>Peptococcaceae</taxon>
        <taxon>Desulforamulus</taxon>
    </lineage>
</organism>
<name>HISZ_DESRM</name>
<gene>
    <name evidence="1" type="primary">hisZ</name>
    <name type="ordered locus">Dred_2359</name>
</gene>
<sequence length="401" mass="44665">MTSSRFGRLAPGVRDVLPAEAHLMRGLKEKFTKLVETWGYKEVVTPTFEYMENLASEELQEEKFFKFLDRQGHLMALRPDMTRPMARLVATRMKGITPPLRLFYLANVFNYEQPQVGRQREFYQAGVELMGPSSPEADAEVVAMVAEYLMQTGLADFQISIGNVGIFHGLVKQLGLPKEVAQELKEALGNKDFVKVEEILGSHAATPEEARRTLDLIELRGGPEILDRAFGLAQPGPAADAIDNLRQLYWGLTCYGVERHITLDLGLLRGLDYYTGLVFEGYTVAMGFPICGGGRYNQLLAKFGLPMPATGFAVNLERVLVALERLQGPPREPVPDVLVAWEDNSLANALQCVKELRYQGLKVVTAMFEYPPAKAKAEARSLGASRVIYFDKEGKSEELSL</sequence>
<accession>A4J716</accession>
<feature type="chain" id="PRO_1000117676" description="ATP phosphoribosyltransferase regulatory subunit">
    <location>
        <begin position="1"/>
        <end position="401"/>
    </location>
</feature>
<keyword id="KW-0028">Amino-acid biosynthesis</keyword>
<keyword id="KW-0963">Cytoplasm</keyword>
<keyword id="KW-0368">Histidine biosynthesis</keyword>
<keyword id="KW-1185">Reference proteome</keyword>
<dbReference type="EMBL" id="CP000612">
    <property type="protein sequence ID" value="ABO50869.1"/>
    <property type="molecule type" value="Genomic_DNA"/>
</dbReference>
<dbReference type="RefSeq" id="WP_011878667.1">
    <property type="nucleotide sequence ID" value="NC_009253.1"/>
</dbReference>
<dbReference type="SMR" id="A4J716"/>
<dbReference type="STRING" id="349161.Dred_2359"/>
<dbReference type="KEGG" id="drm:Dred_2359"/>
<dbReference type="eggNOG" id="COG0124">
    <property type="taxonomic scope" value="Bacteria"/>
</dbReference>
<dbReference type="HOGENOM" id="CLU_025113_0_2_9"/>
<dbReference type="OrthoDB" id="9800814at2"/>
<dbReference type="UniPathway" id="UPA00031">
    <property type="reaction ID" value="UER00006"/>
</dbReference>
<dbReference type="Proteomes" id="UP000001556">
    <property type="component" value="Chromosome"/>
</dbReference>
<dbReference type="GO" id="GO:0005737">
    <property type="term" value="C:cytoplasm"/>
    <property type="evidence" value="ECO:0007669"/>
    <property type="project" value="UniProtKB-SubCell"/>
</dbReference>
<dbReference type="GO" id="GO:0140096">
    <property type="term" value="F:catalytic activity, acting on a protein"/>
    <property type="evidence" value="ECO:0007669"/>
    <property type="project" value="UniProtKB-ARBA"/>
</dbReference>
<dbReference type="GO" id="GO:0004821">
    <property type="term" value="F:histidine-tRNA ligase activity"/>
    <property type="evidence" value="ECO:0007669"/>
    <property type="project" value="TreeGrafter"/>
</dbReference>
<dbReference type="GO" id="GO:0016740">
    <property type="term" value="F:transferase activity"/>
    <property type="evidence" value="ECO:0007669"/>
    <property type="project" value="UniProtKB-ARBA"/>
</dbReference>
<dbReference type="GO" id="GO:0006427">
    <property type="term" value="P:histidyl-tRNA aminoacylation"/>
    <property type="evidence" value="ECO:0007669"/>
    <property type="project" value="TreeGrafter"/>
</dbReference>
<dbReference type="GO" id="GO:0000105">
    <property type="term" value="P:L-histidine biosynthetic process"/>
    <property type="evidence" value="ECO:0007669"/>
    <property type="project" value="UniProtKB-UniRule"/>
</dbReference>
<dbReference type="CDD" id="cd00773">
    <property type="entry name" value="HisRS-like_core"/>
    <property type="match status" value="1"/>
</dbReference>
<dbReference type="Gene3D" id="3.30.930.10">
    <property type="entry name" value="Bira Bifunctional Protein, Domain 2"/>
    <property type="match status" value="1"/>
</dbReference>
<dbReference type="HAMAP" id="MF_00125">
    <property type="entry name" value="HisZ"/>
    <property type="match status" value="1"/>
</dbReference>
<dbReference type="InterPro" id="IPR006195">
    <property type="entry name" value="aa-tRNA-synth_II"/>
</dbReference>
<dbReference type="InterPro" id="IPR045864">
    <property type="entry name" value="aa-tRNA-synth_II/BPL/LPL"/>
</dbReference>
<dbReference type="InterPro" id="IPR041715">
    <property type="entry name" value="HisRS-like_core"/>
</dbReference>
<dbReference type="InterPro" id="IPR004516">
    <property type="entry name" value="HisRS/HisZ"/>
</dbReference>
<dbReference type="InterPro" id="IPR004517">
    <property type="entry name" value="HisZ"/>
</dbReference>
<dbReference type="NCBIfam" id="TIGR00443">
    <property type="entry name" value="hisZ_biosyn_reg"/>
    <property type="match status" value="1"/>
</dbReference>
<dbReference type="PANTHER" id="PTHR43707:SF1">
    <property type="entry name" value="HISTIDINE--TRNA LIGASE, MITOCHONDRIAL-RELATED"/>
    <property type="match status" value="1"/>
</dbReference>
<dbReference type="PANTHER" id="PTHR43707">
    <property type="entry name" value="HISTIDYL-TRNA SYNTHETASE"/>
    <property type="match status" value="1"/>
</dbReference>
<dbReference type="Pfam" id="PF13393">
    <property type="entry name" value="tRNA-synt_His"/>
    <property type="match status" value="1"/>
</dbReference>
<dbReference type="PIRSF" id="PIRSF001549">
    <property type="entry name" value="His-tRNA_synth"/>
    <property type="match status" value="1"/>
</dbReference>
<dbReference type="SUPFAM" id="SSF55681">
    <property type="entry name" value="Class II aaRS and biotin synthetases"/>
    <property type="match status" value="1"/>
</dbReference>
<dbReference type="PROSITE" id="PS50862">
    <property type="entry name" value="AA_TRNA_LIGASE_II"/>
    <property type="match status" value="1"/>
</dbReference>